<reference key="1">
    <citation type="journal article" date="2001" name="Science">
        <title>Comparative genomics of Listeria species.</title>
        <authorList>
            <person name="Glaser P."/>
            <person name="Frangeul L."/>
            <person name="Buchrieser C."/>
            <person name="Rusniok C."/>
            <person name="Amend A."/>
            <person name="Baquero F."/>
            <person name="Berche P."/>
            <person name="Bloecker H."/>
            <person name="Brandt P."/>
            <person name="Chakraborty T."/>
            <person name="Charbit A."/>
            <person name="Chetouani F."/>
            <person name="Couve E."/>
            <person name="de Daruvar A."/>
            <person name="Dehoux P."/>
            <person name="Domann E."/>
            <person name="Dominguez-Bernal G."/>
            <person name="Duchaud E."/>
            <person name="Durant L."/>
            <person name="Dussurget O."/>
            <person name="Entian K.-D."/>
            <person name="Fsihi H."/>
            <person name="Garcia-del Portillo F."/>
            <person name="Garrido P."/>
            <person name="Gautier L."/>
            <person name="Goebel W."/>
            <person name="Gomez-Lopez N."/>
            <person name="Hain T."/>
            <person name="Hauf J."/>
            <person name="Jackson D."/>
            <person name="Jones L.-M."/>
            <person name="Kaerst U."/>
            <person name="Kreft J."/>
            <person name="Kuhn M."/>
            <person name="Kunst F."/>
            <person name="Kurapkat G."/>
            <person name="Madueno E."/>
            <person name="Maitournam A."/>
            <person name="Mata Vicente J."/>
            <person name="Ng E."/>
            <person name="Nedjari H."/>
            <person name="Nordsiek G."/>
            <person name="Novella S."/>
            <person name="de Pablos B."/>
            <person name="Perez-Diaz J.-C."/>
            <person name="Purcell R."/>
            <person name="Remmel B."/>
            <person name="Rose M."/>
            <person name="Schlueter T."/>
            <person name="Simoes N."/>
            <person name="Tierrez A."/>
            <person name="Vazquez-Boland J.-A."/>
            <person name="Voss H."/>
            <person name="Wehland J."/>
            <person name="Cossart P."/>
        </authorList>
    </citation>
    <scope>NUCLEOTIDE SEQUENCE [LARGE SCALE GENOMIC DNA]</scope>
    <source>
        <strain>ATCC BAA-679 / EGD-e</strain>
    </source>
</reference>
<name>TRHO_LISMO</name>
<evidence type="ECO:0000255" key="1">
    <source>
        <dbReference type="HAMAP-Rule" id="MF_00469"/>
    </source>
</evidence>
<comment type="function">
    <text evidence="1">Catalyzes oxygen-dependent 5-hydroxyuridine (ho5U) modification at position 34 in tRNAs.</text>
</comment>
<comment type="catalytic activity">
    <reaction evidence="1">
        <text>uridine(34) in tRNA + AH2 + O2 = 5-hydroxyuridine(34) in tRNA + A + H2O</text>
        <dbReference type="Rhea" id="RHEA:64224"/>
        <dbReference type="Rhea" id="RHEA-COMP:11727"/>
        <dbReference type="Rhea" id="RHEA-COMP:13381"/>
        <dbReference type="ChEBI" id="CHEBI:13193"/>
        <dbReference type="ChEBI" id="CHEBI:15377"/>
        <dbReference type="ChEBI" id="CHEBI:15379"/>
        <dbReference type="ChEBI" id="CHEBI:17499"/>
        <dbReference type="ChEBI" id="CHEBI:65315"/>
        <dbReference type="ChEBI" id="CHEBI:136877"/>
    </reaction>
</comment>
<comment type="similarity">
    <text evidence="1">Belongs to the TrhO family.</text>
</comment>
<sequence>MSDYQVLLYYKYTTIDDPETFAKEHLAACKEMELKGRILVATEGINGTVSGTVEATNKYMDYMANDARFADMVFKIDAADAHAFKKMHVRPRAEIVSLSLEEDVNPLEVTGTYLEPSEFREALLDEDTVILDARNDYEFDIGHFRGAVRPDIQNFRELPGWIEDNREQLADKKIVTYCTGGIRCEKFSGWLKTAGFDDVSQLHGGIATYGKNEETKGELWDGQMYVFDERIAVPINQVNPTIVGKDYFDGTPCERYINCANPYCNKQILASVENEKKYLRSCSHDCRVHPANLYTKNLSKEEFTERLQAINESSPEMVQ</sequence>
<gene>
    <name evidence="1" type="primary">trhO</name>
    <name type="ordered locus">lmo1384</name>
</gene>
<feature type="chain" id="PRO_0000161488" description="tRNA uridine(34) hydroxylase">
    <location>
        <begin position="1"/>
        <end position="319"/>
    </location>
</feature>
<feature type="domain" description="Rhodanese" evidence="1">
    <location>
        <begin position="124"/>
        <end position="218"/>
    </location>
</feature>
<feature type="active site" description="Cysteine persulfide intermediate" evidence="1">
    <location>
        <position position="178"/>
    </location>
</feature>
<dbReference type="EC" id="1.14.-.-" evidence="1"/>
<dbReference type="EMBL" id="AL591978">
    <property type="protein sequence ID" value="CAC99462.1"/>
    <property type="molecule type" value="Genomic_DNA"/>
</dbReference>
<dbReference type="PIR" id="AH1247">
    <property type="entry name" value="AH1247"/>
</dbReference>
<dbReference type="RefSeq" id="NP_464909.1">
    <property type="nucleotide sequence ID" value="NC_003210.1"/>
</dbReference>
<dbReference type="RefSeq" id="WP_003722510.1">
    <property type="nucleotide sequence ID" value="NZ_CP149495.1"/>
</dbReference>
<dbReference type="SMR" id="Q8Y7A4"/>
<dbReference type="STRING" id="169963.gene:17594041"/>
<dbReference type="PaxDb" id="169963-lmo1384"/>
<dbReference type="EnsemblBacteria" id="CAC99462">
    <property type="protein sequence ID" value="CAC99462"/>
    <property type="gene ID" value="CAC99462"/>
</dbReference>
<dbReference type="GeneID" id="987831"/>
<dbReference type="KEGG" id="lmo:lmo1384"/>
<dbReference type="PATRIC" id="fig|169963.11.peg.1422"/>
<dbReference type="eggNOG" id="COG1054">
    <property type="taxonomic scope" value="Bacteria"/>
</dbReference>
<dbReference type="HOGENOM" id="CLU_038878_1_0_9"/>
<dbReference type="OrthoDB" id="9778326at2"/>
<dbReference type="PhylomeDB" id="Q8Y7A4"/>
<dbReference type="BioCyc" id="LMON169963:LMO1384-MONOMER"/>
<dbReference type="Proteomes" id="UP000000817">
    <property type="component" value="Chromosome"/>
</dbReference>
<dbReference type="GO" id="GO:0016705">
    <property type="term" value="F:oxidoreductase activity, acting on paired donors, with incorporation or reduction of molecular oxygen"/>
    <property type="evidence" value="ECO:0007669"/>
    <property type="project" value="UniProtKB-UniRule"/>
</dbReference>
<dbReference type="GO" id="GO:0006400">
    <property type="term" value="P:tRNA modification"/>
    <property type="evidence" value="ECO:0007669"/>
    <property type="project" value="UniProtKB-UniRule"/>
</dbReference>
<dbReference type="CDD" id="cd01518">
    <property type="entry name" value="RHOD_YceA"/>
    <property type="match status" value="1"/>
</dbReference>
<dbReference type="Gene3D" id="3.30.70.100">
    <property type="match status" value="1"/>
</dbReference>
<dbReference type="Gene3D" id="3.40.250.10">
    <property type="entry name" value="Rhodanese-like domain"/>
    <property type="match status" value="1"/>
</dbReference>
<dbReference type="HAMAP" id="MF_00469">
    <property type="entry name" value="TrhO"/>
    <property type="match status" value="1"/>
</dbReference>
<dbReference type="InterPro" id="IPR001763">
    <property type="entry name" value="Rhodanese-like_dom"/>
</dbReference>
<dbReference type="InterPro" id="IPR036873">
    <property type="entry name" value="Rhodanese-like_dom_sf"/>
</dbReference>
<dbReference type="InterPro" id="IPR022111">
    <property type="entry name" value="Rhodanese_C"/>
</dbReference>
<dbReference type="InterPro" id="IPR020936">
    <property type="entry name" value="TrhO"/>
</dbReference>
<dbReference type="InterPro" id="IPR040503">
    <property type="entry name" value="TRHO_N"/>
</dbReference>
<dbReference type="NCBIfam" id="NF001135">
    <property type="entry name" value="PRK00142.1-3"/>
    <property type="match status" value="1"/>
</dbReference>
<dbReference type="PANTHER" id="PTHR43268:SF3">
    <property type="entry name" value="RHODANESE-LIKE DOMAIN-CONTAINING PROTEIN 7-RELATED"/>
    <property type="match status" value="1"/>
</dbReference>
<dbReference type="PANTHER" id="PTHR43268">
    <property type="entry name" value="THIOSULFATE SULFURTRANSFERASE/RHODANESE-LIKE DOMAIN-CONTAINING PROTEIN 2"/>
    <property type="match status" value="1"/>
</dbReference>
<dbReference type="Pfam" id="PF00581">
    <property type="entry name" value="Rhodanese"/>
    <property type="match status" value="1"/>
</dbReference>
<dbReference type="Pfam" id="PF12368">
    <property type="entry name" value="Rhodanese_C"/>
    <property type="match status" value="1"/>
</dbReference>
<dbReference type="Pfam" id="PF17773">
    <property type="entry name" value="UPF0176_N"/>
    <property type="match status" value="1"/>
</dbReference>
<dbReference type="SMART" id="SM00450">
    <property type="entry name" value="RHOD"/>
    <property type="match status" value="1"/>
</dbReference>
<dbReference type="SUPFAM" id="SSF52821">
    <property type="entry name" value="Rhodanese/Cell cycle control phosphatase"/>
    <property type="match status" value="1"/>
</dbReference>
<dbReference type="PROSITE" id="PS50206">
    <property type="entry name" value="RHODANESE_3"/>
    <property type="match status" value="1"/>
</dbReference>
<accession>Q8Y7A4</accession>
<keyword id="KW-0560">Oxidoreductase</keyword>
<keyword id="KW-1185">Reference proteome</keyword>
<keyword id="KW-0819">tRNA processing</keyword>
<organism>
    <name type="scientific">Listeria monocytogenes serovar 1/2a (strain ATCC BAA-679 / EGD-e)</name>
    <dbReference type="NCBI Taxonomy" id="169963"/>
    <lineage>
        <taxon>Bacteria</taxon>
        <taxon>Bacillati</taxon>
        <taxon>Bacillota</taxon>
        <taxon>Bacilli</taxon>
        <taxon>Bacillales</taxon>
        <taxon>Listeriaceae</taxon>
        <taxon>Listeria</taxon>
    </lineage>
</organism>
<protein>
    <recommendedName>
        <fullName evidence="1">tRNA uridine(34) hydroxylase</fullName>
        <ecNumber evidence="1">1.14.-.-</ecNumber>
    </recommendedName>
    <alternativeName>
        <fullName evidence="1">tRNA hydroxylation protein O</fullName>
    </alternativeName>
</protein>
<proteinExistence type="inferred from homology"/>